<keyword id="KW-0068">Autocatalytic cleavage</keyword>
<keyword id="KW-0210">Decarboxylase</keyword>
<keyword id="KW-0456">Lyase</keyword>
<keyword id="KW-0620">Polyamine biosynthesis</keyword>
<keyword id="KW-0670">Pyruvate</keyword>
<keyword id="KW-1185">Reference proteome</keyword>
<keyword id="KW-0949">S-adenosyl-L-methionine</keyword>
<keyword id="KW-0704">Schiff base</keyword>
<keyword id="KW-0745">Spermidine biosynthesis</keyword>
<keyword id="KW-0865">Zymogen</keyword>
<comment type="function">
    <text evidence="1">Catalyzes the decarboxylation of S-adenosylmethionine to S-adenosylmethioninamine (dcAdoMet), the propylamine donor required for the synthesis of the polyamines spermine and spermidine from the diamine putrescine.</text>
</comment>
<comment type="catalytic activity">
    <reaction evidence="1">
        <text>S-adenosyl-L-methionine + H(+) = S-adenosyl 3-(methylsulfanyl)propylamine + CO2</text>
        <dbReference type="Rhea" id="RHEA:15981"/>
        <dbReference type="ChEBI" id="CHEBI:15378"/>
        <dbReference type="ChEBI" id="CHEBI:16526"/>
        <dbReference type="ChEBI" id="CHEBI:57443"/>
        <dbReference type="ChEBI" id="CHEBI:59789"/>
        <dbReference type="EC" id="4.1.1.50"/>
    </reaction>
</comment>
<comment type="cofactor">
    <cofactor evidence="1">
        <name>pyruvate</name>
        <dbReference type="ChEBI" id="CHEBI:15361"/>
    </cofactor>
    <text evidence="1">Binds 1 pyruvoyl group covalently per subunit.</text>
</comment>
<comment type="pathway">
    <text evidence="1">Amine and polyamine biosynthesis; S-adenosylmethioninamine biosynthesis; S-adenosylmethioninamine from S-adenosyl-L-methionine: step 1/1.</text>
</comment>
<comment type="subunit">
    <text evidence="1">Heterotetramer of two alpha and two beta chains arranged as a dimer of alpha/beta heterodimers.</text>
</comment>
<comment type="PTM">
    <text evidence="1">Is synthesized initially as an inactive proenzyme. Formation of the active enzyme involves a self-maturation process in which the active site pyruvoyl group is generated from an internal serine residue via an autocatalytic post-translational modification. Two non-identical subunits are generated from the proenzyme in this reaction, and the pyruvate is formed at the N-terminus of the alpha chain, which is derived from the carboxyl end of the proenzyme. The post-translation cleavage follows an unusual pathway, termed non-hydrolytic serinolysis, in which the side chain hydroxyl group of the serine supplies its oxygen atom to form the C-terminus of the beta chain, while the remainder of the serine residue undergoes an oxidative deamination to produce ammonia and the pyruvoyl group blocking the N-terminus of the alpha chain.</text>
</comment>
<comment type="similarity">
    <text evidence="1">Belongs to the prokaryotic AdoMetDC family. Type 1 subfamily.</text>
</comment>
<organism>
    <name type="scientific">Shouchella clausii (strain KSM-K16)</name>
    <name type="common">Alkalihalobacillus clausii</name>
    <dbReference type="NCBI Taxonomy" id="66692"/>
    <lineage>
        <taxon>Bacteria</taxon>
        <taxon>Bacillati</taxon>
        <taxon>Bacillota</taxon>
        <taxon>Bacilli</taxon>
        <taxon>Bacillales</taxon>
        <taxon>Bacillaceae</taxon>
        <taxon>Shouchella</taxon>
    </lineage>
</organism>
<protein>
    <recommendedName>
        <fullName evidence="1">S-adenosylmethionine decarboxylase proenzyme</fullName>
        <shortName evidence="1">AdoMetDC</shortName>
        <shortName evidence="1">SAMDC</shortName>
        <ecNumber evidence="1">4.1.1.50</ecNumber>
    </recommendedName>
    <component>
        <recommendedName>
            <fullName evidence="1">S-adenosylmethionine decarboxylase beta chain</fullName>
        </recommendedName>
    </component>
    <component>
        <recommendedName>
            <fullName evidence="1">S-adenosylmethionine decarboxylase alpha chain</fullName>
        </recommendedName>
    </component>
</protein>
<evidence type="ECO:0000255" key="1">
    <source>
        <dbReference type="HAMAP-Rule" id="MF_00464"/>
    </source>
</evidence>
<accession>Q5WEH1</accession>
<proteinExistence type="inferred from homology"/>
<name>SPEH_SHOC1</name>
<reference key="1">
    <citation type="submission" date="2003-10" db="EMBL/GenBank/DDBJ databases">
        <title>The complete genome sequence of the alkaliphilic Bacillus clausii KSM-K16.</title>
        <authorList>
            <person name="Takaki Y."/>
            <person name="Kageyama Y."/>
            <person name="Shimamura S."/>
            <person name="Suzuki H."/>
            <person name="Nishi S."/>
            <person name="Hatada Y."/>
            <person name="Kawai S."/>
            <person name="Ito S."/>
            <person name="Horikoshi K."/>
        </authorList>
    </citation>
    <scope>NUCLEOTIDE SEQUENCE [LARGE SCALE GENOMIC DNA]</scope>
    <source>
        <strain>KSM-K16</strain>
    </source>
</reference>
<dbReference type="EC" id="4.1.1.50" evidence="1"/>
<dbReference type="EMBL" id="AP006627">
    <property type="protein sequence ID" value="BAD65239.1"/>
    <property type="molecule type" value="Genomic_DNA"/>
</dbReference>
<dbReference type="SMR" id="Q5WEH1"/>
<dbReference type="STRING" id="66692.ABC2704"/>
<dbReference type="KEGG" id="bcl:ABC2704"/>
<dbReference type="eggNOG" id="COG1586">
    <property type="taxonomic scope" value="Bacteria"/>
</dbReference>
<dbReference type="HOGENOM" id="CLU_125470_2_3_9"/>
<dbReference type="OrthoDB" id="9793120at2"/>
<dbReference type="UniPathway" id="UPA00331">
    <property type="reaction ID" value="UER00451"/>
</dbReference>
<dbReference type="Proteomes" id="UP000001168">
    <property type="component" value="Chromosome"/>
</dbReference>
<dbReference type="GO" id="GO:0005829">
    <property type="term" value="C:cytosol"/>
    <property type="evidence" value="ECO:0007669"/>
    <property type="project" value="TreeGrafter"/>
</dbReference>
<dbReference type="GO" id="GO:0004014">
    <property type="term" value="F:adenosylmethionine decarboxylase activity"/>
    <property type="evidence" value="ECO:0007669"/>
    <property type="project" value="UniProtKB-UniRule"/>
</dbReference>
<dbReference type="GO" id="GO:0008295">
    <property type="term" value="P:spermidine biosynthetic process"/>
    <property type="evidence" value="ECO:0007669"/>
    <property type="project" value="UniProtKB-UniRule"/>
</dbReference>
<dbReference type="FunFam" id="3.30.360.110:FF:000001">
    <property type="entry name" value="S-adenosylmethionine decarboxylase proenzyme"/>
    <property type="match status" value="1"/>
</dbReference>
<dbReference type="Gene3D" id="3.30.160.750">
    <property type="match status" value="1"/>
</dbReference>
<dbReference type="Gene3D" id="3.30.360.110">
    <property type="entry name" value="S-adenosylmethionine decarboxylase domain"/>
    <property type="match status" value="1"/>
</dbReference>
<dbReference type="HAMAP" id="MF_00464">
    <property type="entry name" value="AdoMetDC_1"/>
    <property type="match status" value="1"/>
</dbReference>
<dbReference type="InterPro" id="IPR042286">
    <property type="entry name" value="AdoMetDC_C"/>
</dbReference>
<dbReference type="InterPro" id="IPR003826">
    <property type="entry name" value="AdoMetDC_fam_prok"/>
</dbReference>
<dbReference type="InterPro" id="IPR042284">
    <property type="entry name" value="AdoMetDC_N"/>
</dbReference>
<dbReference type="InterPro" id="IPR016067">
    <property type="entry name" value="S-AdoMet_deCO2ase_core"/>
</dbReference>
<dbReference type="InterPro" id="IPR017716">
    <property type="entry name" value="S-AdoMet_deCOase_pro-enz"/>
</dbReference>
<dbReference type="NCBIfam" id="TIGR03330">
    <property type="entry name" value="SAM_DCase_Bsu"/>
    <property type="match status" value="1"/>
</dbReference>
<dbReference type="PANTHER" id="PTHR33866">
    <property type="entry name" value="S-ADENOSYLMETHIONINE DECARBOXYLASE PROENZYME"/>
    <property type="match status" value="1"/>
</dbReference>
<dbReference type="PANTHER" id="PTHR33866:SF2">
    <property type="entry name" value="S-ADENOSYLMETHIONINE DECARBOXYLASE PROENZYME"/>
    <property type="match status" value="1"/>
</dbReference>
<dbReference type="Pfam" id="PF02675">
    <property type="entry name" value="AdoMet_dc"/>
    <property type="match status" value="1"/>
</dbReference>
<dbReference type="SUPFAM" id="SSF56276">
    <property type="entry name" value="S-adenosylmethionine decarboxylase"/>
    <property type="match status" value="1"/>
</dbReference>
<gene>
    <name evidence="1" type="primary">speH</name>
    <name type="ordered locus">ABC2704</name>
</gene>
<sequence>MDTMGRHVISELWGCDTNKLNNMEFIEQVFVNAALRAGAEVREVAFHKFAPQGVSGVVIISESHLTIHSFPEHGYASIDVYTCGPVIDPNVAAEFIARELNATTSEVLELPRGMGPVKPEKRLSHSAVK</sequence>
<feature type="chain" id="PRO_0000030099" description="S-adenosylmethionine decarboxylase beta chain" evidence="1">
    <location>
        <begin position="1"/>
        <end position="62"/>
    </location>
</feature>
<feature type="chain" id="PRO_0000030100" description="S-adenosylmethionine decarboxylase alpha chain" evidence="1">
    <location>
        <begin position="63"/>
        <end position="129"/>
    </location>
</feature>
<feature type="active site" description="Schiff-base intermediate with substrate; via pyruvic acid" evidence="1">
    <location>
        <position position="63"/>
    </location>
</feature>
<feature type="active site" description="Proton acceptor; for processing activity" evidence="1">
    <location>
        <position position="68"/>
    </location>
</feature>
<feature type="active site" description="Proton donor; for catalytic activity" evidence="1">
    <location>
        <position position="83"/>
    </location>
</feature>
<feature type="site" description="Cleavage (non-hydrolytic); by autolysis" evidence="1">
    <location>
        <begin position="62"/>
        <end position="63"/>
    </location>
</feature>
<feature type="modified residue" description="Pyruvic acid (Ser); by autocatalysis" evidence="1">
    <location>
        <position position="63"/>
    </location>
</feature>